<comment type="function">
    <text evidence="1">Catalyzes the conversion of glucosamine-6-phosphate to glucosamine-1-phosphate.</text>
</comment>
<comment type="catalytic activity">
    <reaction evidence="1">
        <text>alpha-D-glucosamine 1-phosphate = D-glucosamine 6-phosphate</text>
        <dbReference type="Rhea" id="RHEA:23424"/>
        <dbReference type="ChEBI" id="CHEBI:58516"/>
        <dbReference type="ChEBI" id="CHEBI:58725"/>
        <dbReference type="EC" id="5.4.2.10"/>
    </reaction>
</comment>
<comment type="cofactor">
    <cofactor evidence="1">
        <name>Mg(2+)</name>
        <dbReference type="ChEBI" id="CHEBI:18420"/>
    </cofactor>
    <text evidence="1">Binds 1 Mg(2+) ion per subunit.</text>
</comment>
<comment type="PTM">
    <text evidence="1">Activated by phosphorylation.</text>
</comment>
<comment type="similarity">
    <text evidence="1">Belongs to the phosphohexose mutase family.</text>
</comment>
<protein>
    <recommendedName>
        <fullName evidence="1">Phosphoglucosamine mutase</fullName>
        <ecNumber evidence="1">5.4.2.10</ecNumber>
    </recommendedName>
</protein>
<organism>
    <name type="scientific">Ruminiclostridium cellulolyticum (strain ATCC 35319 / DSM 5812 / JCM 6584 / H10)</name>
    <name type="common">Clostridium cellulolyticum</name>
    <dbReference type="NCBI Taxonomy" id="394503"/>
    <lineage>
        <taxon>Bacteria</taxon>
        <taxon>Bacillati</taxon>
        <taxon>Bacillota</taxon>
        <taxon>Clostridia</taxon>
        <taxon>Eubacteriales</taxon>
        <taxon>Oscillospiraceae</taxon>
        <taxon>Ruminiclostridium</taxon>
    </lineage>
</organism>
<feature type="chain" id="PRO_1000185360" description="Phosphoglucosamine mutase">
    <location>
        <begin position="1"/>
        <end position="449"/>
    </location>
</feature>
<feature type="active site" description="Phosphoserine intermediate" evidence="1">
    <location>
        <position position="101"/>
    </location>
</feature>
<feature type="binding site" description="via phosphate group" evidence="1">
    <location>
        <position position="101"/>
    </location>
    <ligand>
        <name>Mg(2+)</name>
        <dbReference type="ChEBI" id="CHEBI:18420"/>
    </ligand>
</feature>
<feature type="binding site" evidence="1">
    <location>
        <position position="241"/>
    </location>
    <ligand>
        <name>Mg(2+)</name>
        <dbReference type="ChEBI" id="CHEBI:18420"/>
    </ligand>
</feature>
<feature type="binding site" evidence="1">
    <location>
        <position position="243"/>
    </location>
    <ligand>
        <name>Mg(2+)</name>
        <dbReference type="ChEBI" id="CHEBI:18420"/>
    </ligand>
</feature>
<feature type="binding site" evidence="1">
    <location>
        <position position="245"/>
    </location>
    <ligand>
        <name>Mg(2+)</name>
        <dbReference type="ChEBI" id="CHEBI:18420"/>
    </ligand>
</feature>
<feature type="modified residue" description="Phosphoserine" evidence="1">
    <location>
        <position position="101"/>
    </location>
</feature>
<reference key="1">
    <citation type="submission" date="2009-01" db="EMBL/GenBank/DDBJ databases">
        <title>Complete sequence of Clostridium cellulolyticum H10.</title>
        <authorList>
            <consortium name="US DOE Joint Genome Institute"/>
            <person name="Lucas S."/>
            <person name="Copeland A."/>
            <person name="Lapidus A."/>
            <person name="Glavina del Rio T."/>
            <person name="Dalin E."/>
            <person name="Tice H."/>
            <person name="Bruce D."/>
            <person name="Goodwin L."/>
            <person name="Pitluck S."/>
            <person name="Chertkov O."/>
            <person name="Saunders E."/>
            <person name="Brettin T."/>
            <person name="Detter J.C."/>
            <person name="Han C."/>
            <person name="Larimer F."/>
            <person name="Land M."/>
            <person name="Hauser L."/>
            <person name="Kyrpides N."/>
            <person name="Ivanova N."/>
            <person name="Zhou J."/>
            <person name="Richardson P."/>
        </authorList>
    </citation>
    <scope>NUCLEOTIDE SEQUENCE [LARGE SCALE GENOMIC DNA]</scope>
    <source>
        <strain>ATCC 35319 / DSM 5812 / JCM 6584 / H10</strain>
    </source>
</reference>
<keyword id="KW-0413">Isomerase</keyword>
<keyword id="KW-0460">Magnesium</keyword>
<keyword id="KW-0479">Metal-binding</keyword>
<keyword id="KW-0597">Phosphoprotein</keyword>
<keyword id="KW-1185">Reference proteome</keyword>
<sequence>MGRLFGTDGVRGVANLELTPKLAYQLGQAGAYVLTGETKHTPKILVGMDTRISGDMLEAALISGICSVGAQVVSLGVIPTPAIAYLTRQYDADAGVVISASHNPFEYNGIKFFNSNGYKLPDAIEDKIEEIIQNGGEDLPKPVGQNIGFKCYQENALEDYVNFVKGTITGDFEGIKVAIDCANGASFQAAPMALFDLKADVSVINNEPDGTNINSGCGSTHMRQLQAYVKEIKADIGFAFDGDADRVLAVDENGNIVDGDQIMAIIGLYLKDKGILSQNTIVATVMSNMGLDIMAKNKGLTIEKTKVGDRYVLEEMLNKGYMLGGEQSGHIIFLDHNTTGDGLLTAVQLLKVLKDSGKKLSELAGVMEILPQVLINAKVTNEKKYKYLDDEVIKKMCKELEDEFKGEGRVLIRPSGTEPLVRVMIEGKDKDIITRRAKELVRVIEGRLS</sequence>
<proteinExistence type="inferred from homology"/>
<accession>B8I0I6</accession>
<name>GLMM_RUMCH</name>
<dbReference type="EC" id="5.4.2.10" evidence="1"/>
<dbReference type="EMBL" id="CP001348">
    <property type="protein sequence ID" value="ACL75561.1"/>
    <property type="molecule type" value="Genomic_DNA"/>
</dbReference>
<dbReference type="RefSeq" id="WP_015924713.1">
    <property type="nucleotide sequence ID" value="NC_011898.1"/>
</dbReference>
<dbReference type="SMR" id="B8I0I6"/>
<dbReference type="STRING" id="394503.Ccel_1204"/>
<dbReference type="KEGG" id="cce:Ccel_1204"/>
<dbReference type="eggNOG" id="COG1109">
    <property type="taxonomic scope" value="Bacteria"/>
</dbReference>
<dbReference type="HOGENOM" id="CLU_016950_7_0_9"/>
<dbReference type="OrthoDB" id="9806956at2"/>
<dbReference type="Proteomes" id="UP000001349">
    <property type="component" value="Chromosome"/>
</dbReference>
<dbReference type="GO" id="GO:0005829">
    <property type="term" value="C:cytosol"/>
    <property type="evidence" value="ECO:0007669"/>
    <property type="project" value="TreeGrafter"/>
</dbReference>
<dbReference type="GO" id="GO:0000287">
    <property type="term" value="F:magnesium ion binding"/>
    <property type="evidence" value="ECO:0007669"/>
    <property type="project" value="UniProtKB-UniRule"/>
</dbReference>
<dbReference type="GO" id="GO:0008966">
    <property type="term" value="F:phosphoglucosamine mutase activity"/>
    <property type="evidence" value="ECO:0007669"/>
    <property type="project" value="UniProtKB-UniRule"/>
</dbReference>
<dbReference type="GO" id="GO:0004615">
    <property type="term" value="F:phosphomannomutase activity"/>
    <property type="evidence" value="ECO:0007669"/>
    <property type="project" value="TreeGrafter"/>
</dbReference>
<dbReference type="GO" id="GO:0005975">
    <property type="term" value="P:carbohydrate metabolic process"/>
    <property type="evidence" value="ECO:0007669"/>
    <property type="project" value="InterPro"/>
</dbReference>
<dbReference type="GO" id="GO:0009252">
    <property type="term" value="P:peptidoglycan biosynthetic process"/>
    <property type="evidence" value="ECO:0007669"/>
    <property type="project" value="TreeGrafter"/>
</dbReference>
<dbReference type="GO" id="GO:0006048">
    <property type="term" value="P:UDP-N-acetylglucosamine biosynthetic process"/>
    <property type="evidence" value="ECO:0007669"/>
    <property type="project" value="TreeGrafter"/>
</dbReference>
<dbReference type="CDD" id="cd05802">
    <property type="entry name" value="GlmM"/>
    <property type="match status" value="1"/>
</dbReference>
<dbReference type="FunFam" id="3.30.310.50:FF:000001">
    <property type="entry name" value="Phosphoglucosamine mutase"/>
    <property type="match status" value="1"/>
</dbReference>
<dbReference type="FunFam" id="3.40.120.10:FF:000001">
    <property type="entry name" value="Phosphoglucosamine mutase"/>
    <property type="match status" value="1"/>
</dbReference>
<dbReference type="FunFam" id="3.40.120.10:FF:000002">
    <property type="entry name" value="Phosphoglucosamine mutase"/>
    <property type="match status" value="1"/>
</dbReference>
<dbReference type="Gene3D" id="3.40.120.10">
    <property type="entry name" value="Alpha-D-Glucose-1,6-Bisphosphate, subunit A, domain 3"/>
    <property type="match status" value="3"/>
</dbReference>
<dbReference type="Gene3D" id="3.30.310.50">
    <property type="entry name" value="Alpha-D-phosphohexomutase, C-terminal domain"/>
    <property type="match status" value="1"/>
</dbReference>
<dbReference type="HAMAP" id="MF_01554_B">
    <property type="entry name" value="GlmM_B"/>
    <property type="match status" value="1"/>
</dbReference>
<dbReference type="InterPro" id="IPR005844">
    <property type="entry name" value="A-D-PHexomutase_a/b/a-I"/>
</dbReference>
<dbReference type="InterPro" id="IPR016055">
    <property type="entry name" value="A-D-PHexomutase_a/b/a-I/II/III"/>
</dbReference>
<dbReference type="InterPro" id="IPR005845">
    <property type="entry name" value="A-D-PHexomutase_a/b/a-II"/>
</dbReference>
<dbReference type="InterPro" id="IPR005846">
    <property type="entry name" value="A-D-PHexomutase_a/b/a-III"/>
</dbReference>
<dbReference type="InterPro" id="IPR005843">
    <property type="entry name" value="A-D-PHexomutase_C"/>
</dbReference>
<dbReference type="InterPro" id="IPR036900">
    <property type="entry name" value="A-D-PHexomutase_C_sf"/>
</dbReference>
<dbReference type="InterPro" id="IPR016066">
    <property type="entry name" value="A-D-PHexomutase_CS"/>
</dbReference>
<dbReference type="InterPro" id="IPR005841">
    <property type="entry name" value="Alpha-D-phosphohexomutase_SF"/>
</dbReference>
<dbReference type="InterPro" id="IPR006352">
    <property type="entry name" value="GlmM_bact"/>
</dbReference>
<dbReference type="InterPro" id="IPR050060">
    <property type="entry name" value="Phosphoglucosamine_mutase"/>
</dbReference>
<dbReference type="NCBIfam" id="TIGR01455">
    <property type="entry name" value="glmM"/>
    <property type="match status" value="1"/>
</dbReference>
<dbReference type="NCBIfam" id="NF008139">
    <property type="entry name" value="PRK10887.1"/>
    <property type="match status" value="1"/>
</dbReference>
<dbReference type="PANTHER" id="PTHR42946:SF1">
    <property type="entry name" value="PHOSPHOGLUCOMUTASE (ALPHA-D-GLUCOSE-1,6-BISPHOSPHATE-DEPENDENT)"/>
    <property type="match status" value="1"/>
</dbReference>
<dbReference type="PANTHER" id="PTHR42946">
    <property type="entry name" value="PHOSPHOHEXOSE MUTASE"/>
    <property type="match status" value="1"/>
</dbReference>
<dbReference type="Pfam" id="PF02878">
    <property type="entry name" value="PGM_PMM_I"/>
    <property type="match status" value="1"/>
</dbReference>
<dbReference type="Pfam" id="PF02879">
    <property type="entry name" value="PGM_PMM_II"/>
    <property type="match status" value="1"/>
</dbReference>
<dbReference type="Pfam" id="PF02880">
    <property type="entry name" value="PGM_PMM_III"/>
    <property type="match status" value="1"/>
</dbReference>
<dbReference type="Pfam" id="PF00408">
    <property type="entry name" value="PGM_PMM_IV"/>
    <property type="match status" value="1"/>
</dbReference>
<dbReference type="PRINTS" id="PR00509">
    <property type="entry name" value="PGMPMM"/>
</dbReference>
<dbReference type="SUPFAM" id="SSF55957">
    <property type="entry name" value="Phosphoglucomutase, C-terminal domain"/>
    <property type="match status" value="1"/>
</dbReference>
<dbReference type="SUPFAM" id="SSF53738">
    <property type="entry name" value="Phosphoglucomutase, first 3 domains"/>
    <property type="match status" value="3"/>
</dbReference>
<dbReference type="PROSITE" id="PS00710">
    <property type="entry name" value="PGM_PMM"/>
    <property type="match status" value="1"/>
</dbReference>
<gene>
    <name evidence="1" type="primary">glmM</name>
    <name type="ordered locus">Ccel_1204</name>
</gene>
<evidence type="ECO:0000255" key="1">
    <source>
        <dbReference type="HAMAP-Rule" id="MF_01554"/>
    </source>
</evidence>